<reference key="1">
    <citation type="submission" date="1993-01" db="EMBL/GenBank/DDBJ databases">
        <title>RpoN-independent promoters having a conserved GG-N10-GC motif in Pseudomonas aeruginosa.</title>
        <authorList>
            <person name="Savioz A."/>
            <person name="Zimmermann A."/>
            <person name="Haas D."/>
        </authorList>
    </citation>
    <scope>NUCLEOTIDE SEQUENCE [GENOMIC DNA]</scope>
    <source>
        <strain>ATCC 15692 / DSM 22644 / CIP 104116 / JCM 14847 / LMG 12228 / 1C / PRS 101 / PAO1</strain>
    </source>
</reference>
<reference key="2">
    <citation type="journal article" date="2000" name="Nature">
        <title>Complete genome sequence of Pseudomonas aeruginosa PAO1, an opportunistic pathogen.</title>
        <authorList>
            <person name="Stover C.K."/>
            <person name="Pham X.-Q.T."/>
            <person name="Erwin A.L."/>
            <person name="Mizoguchi S.D."/>
            <person name="Warrener P."/>
            <person name="Hickey M.J."/>
            <person name="Brinkman F.S.L."/>
            <person name="Hufnagle W.O."/>
            <person name="Kowalik D.J."/>
            <person name="Lagrou M."/>
            <person name="Garber R.L."/>
            <person name="Goltry L."/>
            <person name="Tolentino E."/>
            <person name="Westbrock-Wadman S."/>
            <person name="Yuan Y."/>
            <person name="Brody L.L."/>
            <person name="Coulter S.N."/>
            <person name="Folger K.R."/>
            <person name="Kas A."/>
            <person name="Larbig K."/>
            <person name="Lim R.M."/>
            <person name="Smith K.A."/>
            <person name="Spencer D.H."/>
            <person name="Wong G.K.-S."/>
            <person name="Wu Z."/>
            <person name="Paulsen I.T."/>
            <person name="Reizer J."/>
            <person name="Saier M.H. Jr."/>
            <person name="Hancock R.E.W."/>
            <person name="Lory S."/>
            <person name="Olson M.V."/>
        </authorList>
    </citation>
    <scope>NUCLEOTIDE SEQUENCE [LARGE SCALE GENOMIC DNA]</scope>
    <source>
        <strain>ATCC 15692 / DSM 22644 / CIP 104116 / JCM 14847 / LMG 12228 / 1C / PRS 101 / PAO1</strain>
    </source>
</reference>
<reference key="3">
    <citation type="journal article" date="1991" name="Mol. Microbiol.">
        <title>Anaerobic growth and cyanide synthesis of Pseudomonas aeruginosa depend on anr, a regulatory gene homologous with fnr of Escherichia coli.</title>
        <authorList>
            <person name="Zimmermann A."/>
            <person name="Reimmann C."/>
            <person name="Galimand M."/>
            <person name="Haas D."/>
        </authorList>
    </citation>
    <scope>NUCLEOTIDE SEQUENCE [GENOMIC DNA] OF 1-61</scope>
    <source>
        <strain>ATCC 15692 / DSM 22644 / CIP 104116 / JCM 14847 / LMG 12228 / 1C / PRS 101 / PAO1</strain>
    </source>
</reference>
<sequence length="182" mass="19805">MIFDEFTLKSQIRAVPDFPKPGVVFRDITPLFQSPRALRMTVDSFVQRYIEADFSHIGAMDARGFLIGSAVAYALNKPLVLFRKQGKLPADVLAEGYQTEYGEAFLEVHADSLCEGDSVLIFDDLIATGGTLLAAASLVRRLGARVFEAAAIIDLPELGGSTRLQDAGISTFSLTAFALDER</sequence>
<keyword id="KW-0963">Cytoplasm</keyword>
<keyword id="KW-0328">Glycosyltransferase</keyword>
<keyword id="KW-0660">Purine salvage</keyword>
<keyword id="KW-1185">Reference proteome</keyword>
<keyword id="KW-0808">Transferase</keyword>
<accession>Q04633</accession>
<dbReference type="EC" id="2.4.2.7" evidence="1"/>
<dbReference type="EMBL" id="M98276">
    <property type="protein sequence ID" value="AAA25714.1"/>
    <property type="molecule type" value="Genomic_DNA"/>
</dbReference>
<dbReference type="EMBL" id="AE004091">
    <property type="protein sequence ID" value="AAG04932.1"/>
    <property type="molecule type" value="Genomic_DNA"/>
</dbReference>
<dbReference type="EMBL" id="X57736">
    <property type="protein sequence ID" value="CAA40907.1"/>
    <property type="molecule type" value="Genomic_DNA"/>
</dbReference>
<dbReference type="PIR" id="F83453">
    <property type="entry name" value="F83453"/>
</dbReference>
<dbReference type="RefSeq" id="NP_250234.1">
    <property type="nucleotide sequence ID" value="NC_002516.2"/>
</dbReference>
<dbReference type="RefSeq" id="WP_003087259.1">
    <property type="nucleotide sequence ID" value="NZ_QZGE01000032.1"/>
</dbReference>
<dbReference type="SMR" id="Q04633"/>
<dbReference type="FunCoup" id="Q04633">
    <property type="interactions" value="531"/>
</dbReference>
<dbReference type="STRING" id="208964.PA1543"/>
<dbReference type="PaxDb" id="208964-PA1543"/>
<dbReference type="GeneID" id="879394"/>
<dbReference type="KEGG" id="pae:PA1543"/>
<dbReference type="PATRIC" id="fig|208964.12.peg.1596"/>
<dbReference type="PseudoCAP" id="PA1543"/>
<dbReference type="HOGENOM" id="CLU_063339_3_0_6"/>
<dbReference type="InParanoid" id="Q04633"/>
<dbReference type="OrthoDB" id="9803963at2"/>
<dbReference type="PhylomeDB" id="Q04633"/>
<dbReference type="BioCyc" id="PAER208964:G1FZ6-1571-MONOMER"/>
<dbReference type="UniPathway" id="UPA00588">
    <property type="reaction ID" value="UER00646"/>
</dbReference>
<dbReference type="Proteomes" id="UP000002438">
    <property type="component" value="Chromosome"/>
</dbReference>
<dbReference type="GO" id="GO:0005829">
    <property type="term" value="C:cytosol"/>
    <property type="evidence" value="ECO:0000318"/>
    <property type="project" value="GO_Central"/>
</dbReference>
<dbReference type="GO" id="GO:0003999">
    <property type="term" value="F:adenine phosphoribosyltransferase activity"/>
    <property type="evidence" value="ECO:0000318"/>
    <property type="project" value="GO_Central"/>
</dbReference>
<dbReference type="GO" id="GO:0006168">
    <property type="term" value="P:adenine salvage"/>
    <property type="evidence" value="ECO:0007669"/>
    <property type="project" value="InterPro"/>
</dbReference>
<dbReference type="GO" id="GO:0044209">
    <property type="term" value="P:AMP salvage"/>
    <property type="evidence" value="ECO:0007669"/>
    <property type="project" value="UniProtKB-UniRule"/>
</dbReference>
<dbReference type="GO" id="GO:0006166">
    <property type="term" value="P:purine ribonucleoside salvage"/>
    <property type="evidence" value="ECO:0007669"/>
    <property type="project" value="UniProtKB-KW"/>
</dbReference>
<dbReference type="CDD" id="cd06223">
    <property type="entry name" value="PRTases_typeI"/>
    <property type="match status" value="1"/>
</dbReference>
<dbReference type="FunFam" id="3.40.50.2020:FF:000021">
    <property type="entry name" value="Adenine phosphoribosyltransferase"/>
    <property type="match status" value="1"/>
</dbReference>
<dbReference type="Gene3D" id="3.40.50.2020">
    <property type="match status" value="1"/>
</dbReference>
<dbReference type="HAMAP" id="MF_00004">
    <property type="entry name" value="Aden_phosphoribosyltr"/>
    <property type="match status" value="1"/>
</dbReference>
<dbReference type="InterPro" id="IPR005764">
    <property type="entry name" value="Ade_phspho_trans"/>
</dbReference>
<dbReference type="InterPro" id="IPR050120">
    <property type="entry name" value="Adenine_PRTase"/>
</dbReference>
<dbReference type="InterPro" id="IPR000836">
    <property type="entry name" value="PRibTrfase_dom"/>
</dbReference>
<dbReference type="InterPro" id="IPR029057">
    <property type="entry name" value="PRTase-like"/>
</dbReference>
<dbReference type="NCBIfam" id="TIGR01090">
    <property type="entry name" value="apt"/>
    <property type="match status" value="1"/>
</dbReference>
<dbReference type="NCBIfam" id="NF002634">
    <property type="entry name" value="PRK02304.1-3"/>
    <property type="match status" value="1"/>
</dbReference>
<dbReference type="NCBIfam" id="NF002636">
    <property type="entry name" value="PRK02304.1-5"/>
    <property type="match status" value="1"/>
</dbReference>
<dbReference type="PANTHER" id="PTHR11776">
    <property type="entry name" value="ADENINE PHOSPHORIBOSYLTRANSFERASE"/>
    <property type="match status" value="1"/>
</dbReference>
<dbReference type="PANTHER" id="PTHR11776:SF7">
    <property type="entry name" value="PHOSPHORIBOSYLTRANSFERASE DOMAIN-CONTAINING PROTEIN"/>
    <property type="match status" value="1"/>
</dbReference>
<dbReference type="Pfam" id="PF00156">
    <property type="entry name" value="Pribosyltran"/>
    <property type="match status" value="1"/>
</dbReference>
<dbReference type="SUPFAM" id="SSF53271">
    <property type="entry name" value="PRTase-like"/>
    <property type="match status" value="1"/>
</dbReference>
<dbReference type="PROSITE" id="PS00103">
    <property type="entry name" value="PUR_PYR_PR_TRANSFER"/>
    <property type="match status" value="1"/>
</dbReference>
<feature type="chain" id="PRO_0000149433" description="Adenine phosphoribosyltransferase">
    <location>
        <begin position="1"/>
        <end position="182"/>
    </location>
</feature>
<proteinExistence type="inferred from homology"/>
<evidence type="ECO:0000255" key="1">
    <source>
        <dbReference type="HAMAP-Rule" id="MF_00004"/>
    </source>
</evidence>
<gene>
    <name evidence="1" type="primary">apt</name>
    <name type="ordered locus">PA1543</name>
</gene>
<comment type="function">
    <text evidence="1">Catalyzes a salvage reaction resulting in the formation of AMP, that is energically less costly than de novo synthesis.</text>
</comment>
<comment type="catalytic activity">
    <reaction evidence="1">
        <text>AMP + diphosphate = 5-phospho-alpha-D-ribose 1-diphosphate + adenine</text>
        <dbReference type="Rhea" id="RHEA:16609"/>
        <dbReference type="ChEBI" id="CHEBI:16708"/>
        <dbReference type="ChEBI" id="CHEBI:33019"/>
        <dbReference type="ChEBI" id="CHEBI:58017"/>
        <dbReference type="ChEBI" id="CHEBI:456215"/>
        <dbReference type="EC" id="2.4.2.7"/>
    </reaction>
</comment>
<comment type="pathway">
    <text evidence="1">Purine metabolism; AMP biosynthesis via salvage pathway; AMP from adenine: step 1/1.</text>
</comment>
<comment type="subunit">
    <text evidence="1">Homodimer.</text>
</comment>
<comment type="subcellular location">
    <subcellularLocation>
        <location evidence="1">Cytoplasm</location>
    </subcellularLocation>
</comment>
<comment type="similarity">
    <text evidence="1">Belongs to the purine/pyrimidine phosphoribosyltransferase family.</text>
</comment>
<name>APT_PSEAE</name>
<organism>
    <name type="scientific">Pseudomonas aeruginosa (strain ATCC 15692 / DSM 22644 / CIP 104116 / JCM 14847 / LMG 12228 / 1C / PRS 101 / PAO1)</name>
    <dbReference type="NCBI Taxonomy" id="208964"/>
    <lineage>
        <taxon>Bacteria</taxon>
        <taxon>Pseudomonadati</taxon>
        <taxon>Pseudomonadota</taxon>
        <taxon>Gammaproteobacteria</taxon>
        <taxon>Pseudomonadales</taxon>
        <taxon>Pseudomonadaceae</taxon>
        <taxon>Pseudomonas</taxon>
    </lineage>
</organism>
<protein>
    <recommendedName>
        <fullName evidence="1">Adenine phosphoribosyltransferase</fullName>
        <shortName evidence="1">APRT</shortName>
        <ecNumber evidence="1">2.4.2.7</ecNumber>
    </recommendedName>
</protein>